<dbReference type="EMBL" id="CU928145">
    <property type="protein sequence ID" value="CAU96776.1"/>
    <property type="molecule type" value="Genomic_DNA"/>
</dbReference>
<dbReference type="RefSeq" id="WP_001160737.1">
    <property type="nucleotide sequence ID" value="NZ_CP028304.1"/>
</dbReference>
<dbReference type="SMR" id="B7LD59"/>
<dbReference type="KEGG" id="eck:EC55989_0911"/>
<dbReference type="HOGENOM" id="CLU_117144_3_0_6"/>
<dbReference type="Proteomes" id="UP000000746">
    <property type="component" value="Chromosome"/>
</dbReference>
<dbReference type="Gene3D" id="3.30.110.70">
    <property type="entry name" value="Hypothetical protein apc22750. Chain B"/>
    <property type="match status" value="1"/>
</dbReference>
<dbReference type="HAMAP" id="MF_00338">
    <property type="entry name" value="UPF0145"/>
    <property type="match status" value="1"/>
</dbReference>
<dbReference type="InterPro" id="IPR035439">
    <property type="entry name" value="UPF0145_dom_sf"/>
</dbReference>
<dbReference type="InterPro" id="IPR002765">
    <property type="entry name" value="UPF0145_YbjQ-like"/>
</dbReference>
<dbReference type="NCBIfam" id="NF002776">
    <property type="entry name" value="PRK02877.1"/>
    <property type="match status" value="1"/>
</dbReference>
<dbReference type="PANTHER" id="PTHR34068">
    <property type="entry name" value="UPF0145 PROTEIN YBJQ"/>
    <property type="match status" value="1"/>
</dbReference>
<dbReference type="PANTHER" id="PTHR34068:SF1">
    <property type="entry name" value="UPF0145 PROTEIN YBJQ"/>
    <property type="match status" value="1"/>
</dbReference>
<dbReference type="Pfam" id="PF01906">
    <property type="entry name" value="YbjQ_1"/>
    <property type="match status" value="1"/>
</dbReference>
<dbReference type="SUPFAM" id="SSF117782">
    <property type="entry name" value="YbjQ-like"/>
    <property type="match status" value="1"/>
</dbReference>
<sequence>MQFSTTPTLEGQTIVEYCGVVTGEAILGANIFRDFFAGIRDIVGGRSGAYEKELRKAREIAFEELGSQARALGADAVVGIDIDYETVGQNGSMLMVSVSGTAVKTRR</sequence>
<name>YBJQ_ECO55</name>
<comment type="similarity">
    <text evidence="1">Belongs to the UPF0145 family.</text>
</comment>
<evidence type="ECO:0000255" key="1">
    <source>
        <dbReference type="HAMAP-Rule" id="MF_00338"/>
    </source>
</evidence>
<proteinExistence type="inferred from homology"/>
<feature type="chain" id="PRO_1000200228" description="UPF0145 protein YbjQ">
    <location>
        <begin position="1"/>
        <end position="107"/>
    </location>
</feature>
<gene>
    <name evidence="1" type="primary">ybjQ</name>
    <name type="ordered locus">EC55989_0911</name>
</gene>
<reference key="1">
    <citation type="journal article" date="2009" name="PLoS Genet.">
        <title>Organised genome dynamics in the Escherichia coli species results in highly diverse adaptive paths.</title>
        <authorList>
            <person name="Touchon M."/>
            <person name="Hoede C."/>
            <person name="Tenaillon O."/>
            <person name="Barbe V."/>
            <person name="Baeriswyl S."/>
            <person name="Bidet P."/>
            <person name="Bingen E."/>
            <person name="Bonacorsi S."/>
            <person name="Bouchier C."/>
            <person name="Bouvet O."/>
            <person name="Calteau A."/>
            <person name="Chiapello H."/>
            <person name="Clermont O."/>
            <person name="Cruveiller S."/>
            <person name="Danchin A."/>
            <person name="Diard M."/>
            <person name="Dossat C."/>
            <person name="Karoui M.E."/>
            <person name="Frapy E."/>
            <person name="Garry L."/>
            <person name="Ghigo J.M."/>
            <person name="Gilles A.M."/>
            <person name="Johnson J."/>
            <person name="Le Bouguenec C."/>
            <person name="Lescat M."/>
            <person name="Mangenot S."/>
            <person name="Martinez-Jehanne V."/>
            <person name="Matic I."/>
            <person name="Nassif X."/>
            <person name="Oztas S."/>
            <person name="Petit M.A."/>
            <person name="Pichon C."/>
            <person name="Rouy Z."/>
            <person name="Ruf C.S."/>
            <person name="Schneider D."/>
            <person name="Tourret J."/>
            <person name="Vacherie B."/>
            <person name="Vallenet D."/>
            <person name="Medigue C."/>
            <person name="Rocha E.P.C."/>
            <person name="Denamur E."/>
        </authorList>
    </citation>
    <scope>NUCLEOTIDE SEQUENCE [LARGE SCALE GENOMIC DNA]</scope>
    <source>
        <strain>55989 / EAEC</strain>
    </source>
</reference>
<keyword id="KW-1185">Reference proteome</keyword>
<protein>
    <recommendedName>
        <fullName evidence="1">UPF0145 protein YbjQ</fullName>
    </recommendedName>
</protein>
<organism>
    <name type="scientific">Escherichia coli (strain 55989 / EAEC)</name>
    <dbReference type="NCBI Taxonomy" id="585055"/>
    <lineage>
        <taxon>Bacteria</taxon>
        <taxon>Pseudomonadati</taxon>
        <taxon>Pseudomonadota</taxon>
        <taxon>Gammaproteobacteria</taxon>
        <taxon>Enterobacterales</taxon>
        <taxon>Enterobacteriaceae</taxon>
        <taxon>Escherichia</taxon>
    </lineage>
</organism>
<accession>B7LD59</accession>